<organism>
    <name type="scientific">Gallus gallus</name>
    <name type="common">Chicken</name>
    <dbReference type="NCBI Taxonomy" id="9031"/>
    <lineage>
        <taxon>Eukaryota</taxon>
        <taxon>Metazoa</taxon>
        <taxon>Chordata</taxon>
        <taxon>Craniata</taxon>
        <taxon>Vertebrata</taxon>
        <taxon>Euteleostomi</taxon>
        <taxon>Archelosauria</taxon>
        <taxon>Archosauria</taxon>
        <taxon>Dinosauria</taxon>
        <taxon>Saurischia</taxon>
        <taxon>Theropoda</taxon>
        <taxon>Coelurosauria</taxon>
        <taxon>Aves</taxon>
        <taxon>Neognathae</taxon>
        <taxon>Galloanserae</taxon>
        <taxon>Galliformes</taxon>
        <taxon>Phasianidae</taxon>
        <taxon>Phasianinae</taxon>
        <taxon>Gallus</taxon>
    </lineage>
</organism>
<name>MMP2_CHICK</name>
<gene>
    <name type="primary">MMP2</name>
</gene>
<dbReference type="EC" id="3.4.24.24" evidence="2"/>
<dbReference type="EMBL" id="U07775">
    <property type="protein sequence ID" value="AAA19596.1"/>
    <property type="molecule type" value="mRNA"/>
</dbReference>
<dbReference type="PIR" id="S46492">
    <property type="entry name" value="S46492"/>
</dbReference>
<dbReference type="RefSeq" id="NP_989751.1">
    <property type="nucleotide sequence ID" value="NM_204420.3"/>
</dbReference>
<dbReference type="SMR" id="Q90611"/>
<dbReference type="FunCoup" id="Q90611">
    <property type="interactions" value="90"/>
</dbReference>
<dbReference type="STRING" id="9031.ENSGALP00000005656"/>
<dbReference type="MEROPS" id="M10.003"/>
<dbReference type="PaxDb" id="9031-ENSGALP00000005656"/>
<dbReference type="Ensembl" id="ENSGALT00010062059.1">
    <property type="protein sequence ID" value="ENSGALP00010038340.1"/>
    <property type="gene ID" value="ENSGALG00010025414.1"/>
</dbReference>
<dbReference type="GeneID" id="386583"/>
<dbReference type="KEGG" id="gga:386583"/>
<dbReference type="CTD" id="4313"/>
<dbReference type="VEuPathDB" id="HostDB:geneid_386583"/>
<dbReference type="eggNOG" id="KOG1565">
    <property type="taxonomic scope" value="Eukaryota"/>
</dbReference>
<dbReference type="GeneTree" id="ENSGT00940000158511"/>
<dbReference type="HOGENOM" id="CLU_015489_6_2_1"/>
<dbReference type="InParanoid" id="Q90611"/>
<dbReference type="OMA" id="CPKDSCN"/>
<dbReference type="OrthoDB" id="406838at2759"/>
<dbReference type="PhylomeDB" id="Q90611"/>
<dbReference type="TreeFam" id="TF315428"/>
<dbReference type="BRENDA" id="3.4.24.24">
    <property type="organism ID" value="1306"/>
</dbReference>
<dbReference type="Reactome" id="R-GGA-1442490">
    <property type="pathway name" value="Collagen degradation"/>
</dbReference>
<dbReference type="Reactome" id="R-GGA-1474228">
    <property type="pathway name" value="Degradation of the extracellular matrix"/>
</dbReference>
<dbReference type="Reactome" id="R-GGA-1592389">
    <property type="pathway name" value="Activation of Matrix Metalloproteinases"/>
</dbReference>
<dbReference type="Reactome" id="R-GGA-3928665">
    <property type="pathway name" value="EPH-ephrin mediated repulsion of cells"/>
</dbReference>
<dbReference type="Reactome" id="R-GGA-9009391">
    <property type="pathway name" value="Extra-nuclear estrogen signaling"/>
</dbReference>
<dbReference type="PRO" id="PR:Q90611"/>
<dbReference type="Proteomes" id="UP000000539">
    <property type="component" value="Chromosome 11"/>
</dbReference>
<dbReference type="Bgee" id="ENSGALG00000003580">
    <property type="expression patterns" value="Expressed in colon and 12 other cell types or tissues"/>
</dbReference>
<dbReference type="GO" id="GO:0005604">
    <property type="term" value="C:basement membrane"/>
    <property type="evidence" value="ECO:0000314"/>
    <property type="project" value="AgBase"/>
</dbReference>
<dbReference type="GO" id="GO:0062023">
    <property type="term" value="C:collagen-containing extracellular matrix"/>
    <property type="evidence" value="ECO:0000314"/>
    <property type="project" value="AgBase"/>
</dbReference>
<dbReference type="GO" id="GO:0005615">
    <property type="term" value="C:extracellular space"/>
    <property type="evidence" value="ECO:0000314"/>
    <property type="project" value="AgBase"/>
</dbReference>
<dbReference type="GO" id="GO:0005886">
    <property type="term" value="C:plasma membrane"/>
    <property type="evidence" value="ECO:0007669"/>
    <property type="project" value="Ensembl"/>
</dbReference>
<dbReference type="GO" id="GO:0030017">
    <property type="term" value="C:sarcomere"/>
    <property type="evidence" value="ECO:0007669"/>
    <property type="project" value="Ensembl"/>
</dbReference>
<dbReference type="GO" id="GO:0004222">
    <property type="term" value="F:metalloendopeptidase activity"/>
    <property type="evidence" value="ECO:0000314"/>
    <property type="project" value="AgBase"/>
</dbReference>
<dbReference type="GO" id="GO:0008270">
    <property type="term" value="F:zinc ion binding"/>
    <property type="evidence" value="ECO:0007669"/>
    <property type="project" value="InterPro"/>
</dbReference>
<dbReference type="GO" id="GO:0001955">
    <property type="term" value="P:blood vessel maturation"/>
    <property type="evidence" value="ECO:0007669"/>
    <property type="project" value="Ensembl"/>
</dbReference>
<dbReference type="GO" id="GO:0060346">
    <property type="term" value="P:bone trabecula formation"/>
    <property type="evidence" value="ECO:0007669"/>
    <property type="project" value="Ensembl"/>
</dbReference>
<dbReference type="GO" id="GO:0016477">
    <property type="term" value="P:cell migration"/>
    <property type="evidence" value="ECO:0007669"/>
    <property type="project" value="Ensembl"/>
</dbReference>
<dbReference type="GO" id="GO:0071230">
    <property type="term" value="P:cellular response to amino acid stimulus"/>
    <property type="evidence" value="ECO:0007669"/>
    <property type="project" value="Ensembl"/>
</dbReference>
<dbReference type="GO" id="GO:1990314">
    <property type="term" value="P:cellular response to insulin-like growth factor stimulus"/>
    <property type="evidence" value="ECO:0000315"/>
    <property type="project" value="AgBase"/>
</dbReference>
<dbReference type="GO" id="GO:0034614">
    <property type="term" value="P:cellular response to reactive oxygen species"/>
    <property type="evidence" value="ECO:0007669"/>
    <property type="project" value="Ensembl"/>
</dbReference>
<dbReference type="GO" id="GO:0071492">
    <property type="term" value="P:cellular response to UV-A"/>
    <property type="evidence" value="ECO:0007669"/>
    <property type="project" value="Ensembl"/>
</dbReference>
<dbReference type="GO" id="GO:0030574">
    <property type="term" value="P:collagen catabolic process"/>
    <property type="evidence" value="ECO:0000318"/>
    <property type="project" value="GO_Central"/>
</dbReference>
<dbReference type="GO" id="GO:0035987">
    <property type="term" value="P:endodermal cell differentiation"/>
    <property type="evidence" value="ECO:0007669"/>
    <property type="project" value="Ensembl"/>
</dbReference>
<dbReference type="GO" id="GO:0030198">
    <property type="term" value="P:extracellular matrix organization"/>
    <property type="evidence" value="ECO:0000318"/>
    <property type="project" value="GO_Central"/>
</dbReference>
<dbReference type="GO" id="GO:0060325">
    <property type="term" value="P:face morphogenesis"/>
    <property type="evidence" value="ECO:0007669"/>
    <property type="project" value="Ensembl"/>
</dbReference>
<dbReference type="GO" id="GO:0001957">
    <property type="term" value="P:intramembranous ossification"/>
    <property type="evidence" value="ECO:0007669"/>
    <property type="project" value="Ensembl"/>
</dbReference>
<dbReference type="GO" id="GO:1904932">
    <property type="term" value="P:negative regulation of cartilage condensation"/>
    <property type="evidence" value="ECO:0000315"/>
    <property type="project" value="AgBase"/>
</dbReference>
<dbReference type="GO" id="GO:0061037">
    <property type="term" value="P:negative regulation of cartilage development"/>
    <property type="evidence" value="ECO:0000315"/>
    <property type="project" value="AgBase"/>
</dbReference>
<dbReference type="GO" id="GO:0051895">
    <property type="term" value="P:negative regulation of focal adhesion assembly"/>
    <property type="evidence" value="ECO:0000314"/>
    <property type="project" value="AgBase"/>
</dbReference>
<dbReference type="GO" id="GO:0001933">
    <property type="term" value="P:negative regulation of protein phosphorylation"/>
    <property type="evidence" value="ECO:0000315"/>
    <property type="project" value="AgBase"/>
</dbReference>
<dbReference type="GO" id="GO:1904707">
    <property type="term" value="P:positive regulation of vascular associated smooth muscle cell proliferation"/>
    <property type="evidence" value="ECO:0007669"/>
    <property type="project" value="Ensembl"/>
</dbReference>
<dbReference type="GO" id="GO:0006508">
    <property type="term" value="P:proteolysis"/>
    <property type="evidence" value="ECO:0007669"/>
    <property type="project" value="UniProtKB-KW"/>
</dbReference>
<dbReference type="GO" id="GO:0043408">
    <property type="term" value="P:regulation of MAPK cascade"/>
    <property type="evidence" value="ECO:0000315"/>
    <property type="project" value="AgBase"/>
</dbReference>
<dbReference type="GO" id="GO:1904645">
    <property type="term" value="P:response to amyloid-beta"/>
    <property type="evidence" value="ECO:0007669"/>
    <property type="project" value="Ensembl"/>
</dbReference>
<dbReference type="GO" id="GO:0001666">
    <property type="term" value="P:response to hypoxia"/>
    <property type="evidence" value="ECO:0000318"/>
    <property type="project" value="GO_Central"/>
</dbReference>
<dbReference type="GO" id="GO:0048771">
    <property type="term" value="P:tissue remodeling"/>
    <property type="evidence" value="ECO:0000318"/>
    <property type="project" value="GO_Central"/>
</dbReference>
<dbReference type="CDD" id="cd00062">
    <property type="entry name" value="FN2"/>
    <property type="match status" value="3"/>
</dbReference>
<dbReference type="CDD" id="cd00094">
    <property type="entry name" value="HX"/>
    <property type="match status" value="1"/>
</dbReference>
<dbReference type="CDD" id="cd04278">
    <property type="entry name" value="ZnMc_MMP"/>
    <property type="match status" value="1"/>
</dbReference>
<dbReference type="FunFam" id="2.10.10.10:FF:000002">
    <property type="entry name" value="72 kDa type IV collagenase"/>
    <property type="match status" value="1"/>
</dbReference>
<dbReference type="FunFam" id="2.110.10.10:FF:000004">
    <property type="entry name" value="72 kDa type IV collagenase"/>
    <property type="match status" value="1"/>
</dbReference>
<dbReference type="FunFam" id="3.40.390.10:FF:000010">
    <property type="entry name" value="72 kDa type IV collagenase"/>
    <property type="match status" value="1"/>
</dbReference>
<dbReference type="FunFam" id="2.10.10.10:FF:000001">
    <property type="entry name" value="Fibronectin 1a isoform 1"/>
    <property type="match status" value="2"/>
</dbReference>
<dbReference type="Gene3D" id="3.40.390.10">
    <property type="entry name" value="Collagenase (Catalytic Domain)"/>
    <property type="match status" value="2"/>
</dbReference>
<dbReference type="Gene3D" id="2.10.10.10">
    <property type="entry name" value="Fibronectin, type II, collagen-binding"/>
    <property type="match status" value="2"/>
</dbReference>
<dbReference type="Gene3D" id="2.110.10.10">
    <property type="entry name" value="Hemopexin-like domain"/>
    <property type="match status" value="1"/>
</dbReference>
<dbReference type="InterPro" id="IPR000562">
    <property type="entry name" value="FN_type2_dom"/>
</dbReference>
<dbReference type="InterPro" id="IPR036943">
    <property type="entry name" value="FN_type2_sf"/>
</dbReference>
<dbReference type="InterPro" id="IPR000585">
    <property type="entry name" value="Hemopexin-like_dom"/>
</dbReference>
<dbReference type="InterPro" id="IPR036375">
    <property type="entry name" value="Hemopexin-like_dom_sf"/>
</dbReference>
<dbReference type="InterPro" id="IPR018487">
    <property type="entry name" value="Hemopexin-like_repeat"/>
</dbReference>
<dbReference type="InterPro" id="IPR018486">
    <property type="entry name" value="Hemopexin_CS"/>
</dbReference>
<dbReference type="InterPro" id="IPR013806">
    <property type="entry name" value="Kringle-like"/>
</dbReference>
<dbReference type="InterPro" id="IPR033739">
    <property type="entry name" value="M10A_MMP"/>
</dbReference>
<dbReference type="InterPro" id="IPR024079">
    <property type="entry name" value="MetalloPept_cat_dom_sf"/>
</dbReference>
<dbReference type="InterPro" id="IPR001818">
    <property type="entry name" value="Pept_M10_metallopeptidase"/>
</dbReference>
<dbReference type="InterPro" id="IPR021190">
    <property type="entry name" value="Pept_M10A"/>
</dbReference>
<dbReference type="InterPro" id="IPR021158">
    <property type="entry name" value="Pept_M10A_Zn_BS"/>
</dbReference>
<dbReference type="InterPro" id="IPR006026">
    <property type="entry name" value="Peptidase_Metallo"/>
</dbReference>
<dbReference type="InterPro" id="IPR002477">
    <property type="entry name" value="Peptidoglycan-bd-like"/>
</dbReference>
<dbReference type="InterPro" id="IPR036365">
    <property type="entry name" value="PGBD-like_sf"/>
</dbReference>
<dbReference type="PANTHER" id="PTHR10201:SF29">
    <property type="entry name" value="72 KDA TYPE IV COLLAGENASE"/>
    <property type="match status" value="1"/>
</dbReference>
<dbReference type="PANTHER" id="PTHR10201">
    <property type="entry name" value="MATRIX METALLOPROTEINASE"/>
    <property type="match status" value="1"/>
</dbReference>
<dbReference type="Pfam" id="PF00040">
    <property type="entry name" value="fn2"/>
    <property type="match status" value="3"/>
</dbReference>
<dbReference type="Pfam" id="PF00045">
    <property type="entry name" value="Hemopexin"/>
    <property type="match status" value="4"/>
</dbReference>
<dbReference type="Pfam" id="PF00413">
    <property type="entry name" value="Peptidase_M10"/>
    <property type="match status" value="2"/>
</dbReference>
<dbReference type="Pfam" id="PF01471">
    <property type="entry name" value="PG_binding_1"/>
    <property type="match status" value="1"/>
</dbReference>
<dbReference type="PIRSF" id="PIRSF001191">
    <property type="entry name" value="Peptidase_M10A_matrix"/>
    <property type="match status" value="1"/>
</dbReference>
<dbReference type="PRINTS" id="PR00013">
    <property type="entry name" value="FNTYPEII"/>
</dbReference>
<dbReference type="PRINTS" id="PR00138">
    <property type="entry name" value="MATRIXIN"/>
</dbReference>
<dbReference type="SMART" id="SM00059">
    <property type="entry name" value="FN2"/>
    <property type="match status" value="3"/>
</dbReference>
<dbReference type="SMART" id="SM00120">
    <property type="entry name" value="HX"/>
    <property type="match status" value="4"/>
</dbReference>
<dbReference type="SMART" id="SM00235">
    <property type="entry name" value="ZnMc"/>
    <property type="match status" value="1"/>
</dbReference>
<dbReference type="SUPFAM" id="SSF50923">
    <property type="entry name" value="Hemopexin-like domain"/>
    <property type="match status" value="1"/>
</dbReference>
<dbReference type="SUPFAM" id="SSF57440">
    <property type="entry name" value="Kringle-like"/>
    <property type="match status" value="3"/>
</dbReference>
<dbReference type="SUPFAM" id="SSF55486">
    <property type="entry name" value="Metalloproteases ('zincins'), catalytic domain"/>
    <property type="match status" value="1"/>
</dbReference>
<dbReference type="SUPFAM" id="SSF47090">
    <property type="entry name" value="PGBD-like"/>
    <property type="match status" value="1"/>
</dbReference>
<dbReference type="PROSITE" id="PS00546">
    <property type="entry name" value="CYSTEINE_SWITCH"/>
    <property type="match status" value="1"/>
</dbReference>
<dbReference type="PROSITE" id="PS00023">
    <property type="entry name" value="FN2_1"/>
    <property type="match status" value="3"/>
</dbReference>
<dbReference type="PROSITE" id="PS51092">
    <property type="entry name" value="FN2_2"/>
    <property type="match status" value="3"/>
</dbReference>
<dbReference type="PROSITE" id="PS00024">
    <property type="entry name" value="HEMOPEXIN"/>
    <property type="match status" value="1"/>
</dbReference>
<dbReference type="PROSITE" id="PS51642">
    <property type="entry name" value="HEMOPEXIN_2"/>
    <property type="match status" value="4"/>
</dbReference>
<dbReference type="PROSITE" id="PS00142">
    <property type="entry name" value="ZINC_PROTEASE"/>
    <property type="match status" value="1"/>
</dbReference>
<evidence type="ECO:0000250" key="1"/>
<evidence type="ECO:0000250" key="2">
    <source>
        <dbReference type="UniProtKB" id="P08253"/>
    </source>
</evidence>
<evidence type="ECO:0000255" key="3">
    <source>
        <dbReference type="PROSITE-ProRule" id="PRU00479"/>
    </source>
</evidence>
<evidence type="ECO:0000255" key="4">
    <source>
        <dbReference type="PROSITE-ProRule" id="PRU10095"/>
    </source>
</evidence>
<evidence type="ECO:0000256" key="5">
    <source>
        <dbReference type="SAM" id="MobiDB-lite"/>
    </source>
</evidence>
<evidence type="ECO:0000269" key="6">
    <source>
    </source>
</evidence>
<evidence type="ECO:0000305" key="7"/>
<keyword id="KW-0106">Calcium</keyword>
<keyword id="KW-0177">Collagen degradation</keyword>
<keyword id="KW-0903">Direct protein sequencing</keyword>
<keyword id="KW-1015">Disulfide bond</keyword>
<keyword id="KW-0272">Extracellular matrix</keyword>
<keyword id="KW-0378">Hydrolase</keyword>
<keyword id="KW-0479">Metal-binding</keyword>
<keyword id="KW-0482">Metalloprotease</keyword>
<keyword id="KW-0645">Protease</keyword>
<keyword id="KW-1185">Reference proteome</keyword>
<keyword id="KW-0677">Repeat</keyword>
<keyword id="KW-0964">Secreted</keyword>
<keyword id="KW-0732">Signal</keyword>
<keyword id="KW-0862">Zinc</keyword>
<keyword id="KW-0865">Zymogen</keyword>
<protein>
    <recommendedName>
        <fullName>72 kDa type IV collagenase</fullName>
        <ecNumber evidence="2">3.4.24.24</ecNumber>
    </recommendedName>
    <alternativeName>
        <fullName>72 kDa gelatinase</fullName>
    </alternativeName>
    <alternativeName>
        <fullName>Gelatinase A</fullName>
    </alternativeName>
    <alternativeName>
        <fullName>Matrix metalloproteinase-2</fullName>
        <shortName>MMP-2</shortName>
    </alternativeName>
</protein>
<comment type="catalytic activity">
    <reaction evidence="2">
        <text>Cleavage of gelatin type I and collagen types IV, V, VII, X. Cleaves the collagen-like sequence Pro-Gln-Gly-|-Ile-Ala-Gly-Gln.</text>
        <dbReference type="EC" id="3.4.24.24"/>
    </reaction>
</comment>
<comment type="cofactor">
    <cofactor evidence="2">
        <name>Ca(2+)</name>
        <dbReference type="ChEBI" id="CHEBI:29108"/>
    </cofactor>
    <text evidence="2">Binds 4 Ca(2+) ions per subunit.</text>
</comment>
<comment type="cofactor">
    <cofactor evidence="2">
        <name>Zn(2+)</name>
        <dbReference type="ChEBI" id="CHEBI:29105"/>
    </cofactor>
    <text evidence="2">Binds 2 Zn(2+) ions per subunit.</text>
</comment>
<comment type="subunit">
    <text>Ligand for integrin alpha-V/beta-3.</text>
</comment>
<comment type="subcellular location">
    <subcellularLocation>
        <location evidence="7">Secreted</location>
        <location evidence="7">Extracellular space</location>
        <location evidence="7">Extracellular matrix</location>
    </subcellularLocation>
</comment>
<comment type="tissue specificity">
    <text>Produced by normal skin fibroblasts.</text>
</comment>
<comment type="domain">
    <text>The conserved cysteine present in the cysteine-switch motif binds the catalytic zinc ion, thus inhibiting the enzyme. The dissociation of the cysteine from the zinc ion upon the activation-peptide release activates the enzyme.</text>
</comment>
<comment type="PTM">
    <text evidence="1">The propeptide is processed by MMP14 (MT-MMP1) and MMP16 (MT-MMP3).</text>
</comment>
<comment type="similarity">
    <text evidence="7">Belongs to the peptidase M10A family.</text>
</comment>
<proteinExistence type="evidence at protein level"/>
<feature type="signal peptide" evidence="6">
    <location>
        <begin position="1"/>
        <end position="26"/>
    </location>
</feature>
<feature type="propeptide" id="PRO_0000028722" description="Activation peptide" evidence="6">
    <location>
        <begin position="27"/>
        <end position="106"/>
    </location>
</feature>
<feature type="chain" id="PRO_0000028723" description="72 kDa type IV collagenase">
    <location>
        <begin position="107"/>
        <end position="663"/>
    </location>
</feature>
<feature type="domain" description="Fibronectin type-II 1" evidence="3">
    <location>
        <begin position="225"/>
        <end position="273"/>
    </location>
</feature>
<feature type="domain" description="Fibronectin type-II 2" evidence="3">
    <location>
        <begin position="283"/>
        <end position="331"/>
    </location>
</feature>
<feature type="domain" description="Fibronectin type-II 3" evidence="3">
    <location>
        <begin position="341"/>
        <end position="389"/>
    </location>
</feature>
<feature type="repeat" description="Hemopexin 1">
    <location>
        <begin position="475"/>
        <end position="519"/>
    </location>
</feature>
<feature type="repeat" description="Hemopexin 2">
    <location>
        <begin position="520"/>
        <end position="566"/>
    </location>
</feature>
<feature type="repeat" description="Hemopexin 3">
    <location>
        <begin position="568"/>
        <end position="616"/>
    </location>
</feature>
<feature type="repeat" description="Hemopexin 4">
    <location>
        <begin position="617"/>
        <end position="663"/>
    </location>
</feature>
<feature type="region of interest" description="Collagenase-like 1">
    <location>
        <begin position="107"/>
        <end position="218"/>
    </location>
</feature>
<feature type="region of interest" description="Collagen-binding">
    <location>
        <begin position="219"/>
        <end position="393"/>
    </location>
</feature>
<feature type="region of interest" description="Collagenase-like 2">
    <location>
        <begin position="394"/>
        <end position="468"/>
    </location>
</feature>
<feature type="region of interest" description="Disordered" evidence="5">
    <location>
        <begin position="445"/>
        <end position="464"/>
    </location>
</feature>
<feature type="short sequence motif" description="Cysteine switch" evidence="1">
    <location>
        <begin position="97"/>
        <end position="104"/>
    </location>
</feature>
<feature type="compositionally biased region" description="Pro residues" evidence="5">
    <location>
        <begin position="449"/>
        <end position="463"/>
    </location>
</feature>
<feature type="active site" evidence="4">
    <location>
        <position position="401"/>
    </location>
</feature>
<feature type="binding site" description="in inhibited form" evidence="2">
    <location>
        <position position="99"/>
    </location>
    <ligand>
        <name>Zn(2+)</name>
        <dbReference type="ChEBI" id="CHEBI:29105"/>
        <label>1</label>
        <note>catalytic</note>
    </ligand>
</feature>
<feature type="binding site" evidence="2">
    <location>
        <position position="131"/>
    </location>
    <ligand>
        <name>Ca(2+)</name>
        <dbReference type="ChEBI" id="CHEBI:29108"/>
        <label>1</label>
    </ligand>
</feature>
<feature type="binding site" evidence="2">
    <location>
        <position position="165"/>
    </location>
    <ligand>
        <name>Ca(2+)</name>
        <dbReference type="ChEBI" id="CHEBI:29108"/>
        <label>2</label>
    </ligand>
</feature>
<feature type="binding site" evidence="2">
    <location>
        <position position="175"/>
    </location>
    <ligand>
        <name>Zn(2+)</name>
        <dbReference type="ChEBI" id="CHEBI:29105"/>
        <label>2</label>
    </ligand>
</feature>
<feature type="binding site" evidence="2">
    <location>
        <position position="177"/>
    </location>
    <ligand>
        <name>Zn(2+)</name>
        <dbReference type="ChEBI" id="CHEBI:29105"/>
        <label>2</label>
    </ligand>
</feature>
<feature type="binding site" evidence="2">
    <location>
        <position position="182"/>
    </location>
    <ligand>
        <name>Ca(2+)</name>
        <dbReference type="ChEBI" id="CHEBI:29108"/>
        <label>3</label>
    </ligand>
</feature>
<feature type="binding site" evidence="2">
    <location>
        <position position="183"/>
    </location>
    <ligand>
        <name>Ca(2+)</name>
        <dbReference type="ChEBI" id="CHEBI:29108"/>
        <label>3</label>
    </ligand>
</feature>
<feature type="binding site" evidence="2">
    <location>
        <position position="190"/>
    </location>
    <ligand>
        <name>Zn(2+)</name>
        <dbReference type="ChEBI" id="CHEBI:29105"/>
        <label>2</label>
    </ligand>
</feature>
<feature type="binding site" evidence="2">
    <location>
        <position position="197"/>
    </location>
    <ligand>
        <name>Ca(2+)</name>
        <dbReference type="ChEBI" id="CHEBI:29108"/>
        <label>2</label>
    </ligand>
</feature>
<feature type="binding site" evidence="2">
    <location>
        <position position="199"/>
    </location>
    <ligand>
        <name>Ca(2+)</name>
        <dbReference type="ChEBI" id="CHEBI:29108"/>
        <label>2</label>
    </ligand>
</feature>
<feature type="binding site" evidence="2">
    <location>
        <position position="201"/>
    </location>
    <ligand>
        <name>Ca(2+)</name>
        <dbReference type="ChEBI" id="CHEBI:29108"/>
        <label>2</label>
    </ligand>
</feature>
<feature type="binding site" evidence="2">
    <location>
        <position position="203"/>
    </location>
    <ligand>
        <name>Zn(2+)</name>
        <dbReference type="ChEBI" id="CHEBI:29105"/>
        <label>2</label>
    </ligand>
</feature>
<feature type="binding site" evidence="2">
    <location>
        <position position="205"/>
    </location>
    <ligand>
        <name>Ca(2+)</name>
        <dbReference type="ChEBI" id="CHEBI:29108"/>
        <label>3</label>
    </ligand>
</feature>
<feature type="binding site" evidence="2">
    <location>
        <position position="206"/>
    </location>
    <ligand>
        <name>Ca(2+)</name>
        <dbReference type="ChEBI" id="CHEBI:29108"/>
        <label>1</label>
    </ligand>
</feature>
<feature type="binding site" evidence="2">
    <location>
        <position position="208"/>
    </location>
    <ligand>
        <name>Ca(2+)</name>
        <dbReference type="ChEBI" id="CHEBI:29108"/>
        <label>1</label>
    </ligand>
</feature>
<feature type="binding site" evidence="2">
    <location>
        <position position="208"/>
    </location>
    <ligand>
        <name>Ca(2+)</name>
        <dbReference type="ChEBI" id="CHEBI:29108"/>
        <label>3</label>
    </ligand>
</feature>
<feature type="binding site" evidence="2">
    <location>
        <position position="400"/>
    </location>
    <ligand>
        <name>Zn(2+)</name>
        <dbReference type="ChEBI" id="CHEBI:29105"/>
        <label>1</label>
        <note>catalytic</note>
    </ligand>
</feature>
<feature type="binding site" evidence="2">
    <location>
        <position position="404"/>
    </location>
    <ligand>
        <name>Zn(2+)</name>
        <dbReference type="ChEBI" id="CHEBI:29105"/>
        <label>1</label>
        <note>catalytic</note>
    </ligand>
</feature>
<feature type="binding site" evidence="2">
    <location>
        <position position="410"/>
    </location>
    <ligand>
        <name>Zn(2+)</name>
        <dbReference type="ChEBI" id="CHEBI:29105"/>
        <label>1</label>
        <note>catalytic</note>
    </ligand>
</feature>
<feature type="binding site" evidence="2">
    <location>
        <position position="479"/>
    </location>
    <ligand>
        <name>Ca(2+)</name>
        <dbReference type="ChEBI" id="CHEBI:29108"/>
        <label>4</label>
    </ligand>
</feature>
<feature type="binding site" evidence="2">
    <location>
        <position position="524"/>
    </location>
    <ligand>
        <name>Ca(2+)</name>
        <dbReference type="ChEBI" id="CHEBI:29108"/>
        <label>4</label>
    </ligand>
</feature>
<feature type="binding site" evidence="2">
    <location>
        <position position="572"/>
    </location>
    <ligand>
        <name>Ca(2+)</name>
        <dbReference type="ChEBI" id="CHEBI:29108"/>
        <label>4</label>
    </ligand>
</feature>
<feature type="binding site" evidence="2">
    <location>
        <position position="621"/>
    </location>
    <ligand>
        <name>Ca(2+)</name>
        <dbReference type="ChEBI" id="CHEBI:29108"/>
        <label>4</label>
    </ligand>
</feature>
<feature type="disulfide bond" evidence="3">
    <location>
        <begin position="230"/>
        <end position="256"/>
    </location>
</feature>
<feature type="disulfide bond" evidence="3">
    <location>
        <begin position="244"/>
        <end position="271"/>
    </location>
</feature>
<feature type="disulfide bond" evidence="3">
    <location>
        <begin position="288"/>
        <end position="314"/>
    </location>
</feature>
<feature type="disulfide bond" evidence="3">
    <location>
        <begin position="302"/>
        <end position="329"/>
    </location>
</feature>
<feature type="disulfide bond" evidence="3">
    <location>
        <begin position="346"/>
        <end position="372"/>
    </location>
</feature>
<feature type="disulfide bond" evidence="3">
    <location>
        <begin position="360"/>
        <end position="387"/>
    </location>
</feature>
<feature type="disulfide bond" evidence="3">
    <location>
        <begin position="472"/>
        <end position="663"/>
    </location>
</feature>
<feature type="sequence conflict" description="In Ref. 2; AA sequence." evidence="7" ref="2">
    <original>P</original>
    <variation>Q</variation>
    <location>
        <position position="40"/>
    </location>
</feature>
<feature type="sequence conflict" description="In Ref. 2; AA sequence." evidence="7" ref="2">
    <original>W</original>
    <variation>T</variation>
    <location>
        <position position="116"/>
    </location>
</feature>
<feature type="sequence conflict" description="In Ref. 2; AA sequence." evidence="7" ref="2">
    <original>T</original>
    <variation>I</variation>
    <location>
        <position position="122"/>
    </location>
</feature>
<reference key="1">
    <citation type="journal article" date="1994" name="Biochem. J.">
        <title>Cloning of a 72 kDa matrix metalloproteinase (gelatinase) from chicken embryo fibroblasts using gene family PCR: expression of the gelatinase increases upon malignant transformation.</title>
        <authorList>
            <person name="Aimes R.T."/>
            <person name="French D.L."/>
            <person name="Quigley J.P."/>
        </authorList>
    </citation>
    <scope>NUCLEOTIDE SEQUENCE [MRNA]</scope>
    <source>
        <tissue>Embryo</tissue>
    </source>
</reference>
<reference key="2">
    <citation type="journal article" date="1991" name="J. Biol. Chem.">
        <title>Isolation and characterization of a 70-kDa metalloprotease (gelatinase) that is elevated in Rous sarcoma virus-transformed chicken embryo fibroblasts.</title>
        <authorList>
            <person name="Chen J.-M."/>
            <person name="Aimes R.T."/>
            <person name="Ward G.R."/>
            <person name="Youngleib G.L."/>
            <person name="Quigley J.P."/>
        </authorList>
    </citation>
    <scope>PROTEIN SEQUENCE OF 27-41 AND 107-122</scope>
</reference>
<accession>Q90611</accession>
<sequence length="663" mass="74941">MKTHSVFGFFFKVLLIQVYLFNKTLAAPSPIIKFPGDSTPKTDKELAVQYLNKYYGCPKDNCNLFVLKDTLKKMQKFFGLPETGDLDQNTIETMKKPRCGNPDVANYNFFPRKPKWEKNHITYRIIGYTPDLDPETVDDAFARAFKVWSDVTPLRFNRINDGEADIMINFGRWEHGDGYPFDGKDGLLAHAFAPGPGIGGDSHFDDDELWTLGEGQVVRVKYGNADGEYCKFPFWFNGKEYNSCTDAGRNDGFLWCSTTKDFDADGKYGFCPHESLFTMGGNGDGQPCKFPFKFQGQSYDQCTTEGRTDGYRWCGTTEDYDRDKKYGFCPETAMSTVGGNSEGAPCVFPFIFLGNKYDSCTSAGRNDGKLWCASTSSYDDDRKWGFCPDQGYSLFLVAAHEFGHAMGLEHSEDPGALMAPIYTYTKNFRLSQDDIKGIQELYEVSPDVEPGPGPGPGPGPRPTLGPVTPELCKHDIVFDGVAQIRGEIFFFKDRFMWRTVNPRGKPTGPLLVATFWPDLPEKIDAVYESPQDEKAVFFAGNEYWVYTASNLDRGYPKKLTSLGLPPDVQRIDAAFNWGRNKKTYIFSGDRYWKYNEEKKKMELATPKFIADSWNGVPDNLDAVLGLTDSGYTYFFKDQYYLQMEDKSLKIVKIGKISSDWLGC</sequence>